<comment type="function">
    <text>Major component of the virus occlusion bodies, which are large proteinaceous structures (polyhedra), that protect the virus from the outside environment for extended periods until they are ingested by insect larvae.</text>
</comment>
<comment type="similarity">
    <text evidence="1">Belongs to the polyhedrin family.</text>
</comment>
<proteinExistence type="inferred from homology"/>
<reference key="1">
    <citation type="journal article" date="1988" name="Gene">
        <title>Physical map and polyhedrin gene sequence of Lymantria dispar nuclear polyhedrosis virus.</title>
        <authorList>
            <person name="Smith I.R.L."/>
            <person name="van Beek N.A.M."/>
            <person name="Podgwaite J.D."/>
            <person name="Wood H.A."/>
        </authorList>
    </citation>
    <scope>NUCLEOTIDE SEQUENCE [GENOMIC DNA]</scope>
</reference>
<reference key="2">
    <citation type="journal article" date="1989" name="J. Invertebr. Pathol.">
        <title>Nucleotide sequence of Lymantria dispar nuclear polyhedrosis virus polyhedrin gene.</title>
        <authorList>
            <person name="Chang M.T."/>
            <person name="Lanner-Herrera C."/>
            <person name="Fikes M."/>
        </authorList>
    </citation>
    <scope>NUCLEOTIDE SEQUENCE [GENOMIC DNA]</scope>
</reference>
<name>PYHD_NPVLD</name>
<keyword id="KW-0842">Viral occlusion body</keyword>
<feature type="chain" id="PRO_0000217251" description="Polyhedrin">
    <location>
        <begin position="1"/>
        <end position="245"/>
    </location>
</feature>
<gene>
    <name type="primary">PH</name>
    <name type="synonym">P29</name>
    <name type="synonym">POLH</name>
</gene>
<protein>
    <recommendedName>
        <fullName>Polyhedrin</fullName>
    </recommendedName>
    <alternativeName>
        <fullName>Major occlusion protein</fullName>
    </alternativeName>
</protein>
<dbReference type="EMBL" id="M23176">
    <property type="protein sequence ID" value="AAA46742.1"/>
    <property type="molecule type" value="Genomic_DNA"/>
</dbReference>
<dbReference type="SMR" id="P20587"/>
<dbReference type="GO" id="GO:0039679">
    <property type="term" value="C:viral occlusion body"/>
    <property type="evidence" value="ECO:0007669"/>
    <property type="project" value="UniProtKB-KW"/>
</dbReference>
<dbReference type="GO" id="GO:0005198">
    <property type="term" value="F:structural molecule activity"/>
    <property type="evidence" value="ECO:0007669"/>
    <property type="project" value="InterPro"/>
</dbReference>
<dbReference type="InterPro" id="IPR001746">
    <property type="entry name" value="Polyhedrin"/>
</dbReference>
<dbReference type="Pfam" id="PF00738">
    <property type="entry name" value="Polyhedrin"/>
    <property type="match status" value="1"/>
</dbReference>
<organismHost>
    <name type="scientific">Lepidoptera</name>
    <name type="common">butterflies and moths</name>
    <dbReference type="NCBI Taxonomy" id="7088"/>
</organismHost>
<organism>
    <name type="scientific">Lymantria dispar multicapsid nuclear polyhedrosis virus</name>
    <name type="common">LdMNPV</name>
    <dbReference type="NCBI Taxonomy" id="10449"/>
    <lineage>
        <taxon>Viruses</taxon>
        <taxon>Viruses incertae sedis</taxon>
        <taxon>Naldaviricetes</taxon>
        <taxon>Lefavirales</taxon>
        <taxon>Baculoviridae</taxon>
        <taxon>Alphabaculovirus</taxon>
        <taxon>Alphabaculovirus lydisparis</taxon>
    </lineage>
</organism>
<accession>P20587</accession>
<evidence type="ECO:0000305" key="1"/>
<sequence length="245" mass="28786">MHNFYNYSPALGKTYVYENKYYKNLGTVIKQAKRQKHLEQHEIEERSLDHLDRYLVAEDPFYGPGKNQKLTLFKEIRNVKPDTMKLVVNWSGKEFLRETWTRFMEDSFPIVNDQEVMDIYLTINVRPTRPNRCYKFVAQHALRCDEGYVPHEVIRIVEPSTVENNEYRISLAKRGGGCPIRNLHSAYTTSFEHFLNSVIWDNFYKPIVYVGTTSAEEEEILLEVSLVFKIKEFAPDAPLFQGPAY</sequence>